<dbReference type="EMBL" id="CP000919">
    <property type="protein sequence ID" value="ACO19573.1"/>
    <property type="molecule type" value="Genomic_DNA"/>
</dbReference>
<dbReference type="RefSeq" id="WP_000057241.1">
    <property type="nucleotide sequence ID" value="NC_012466.1"/>
</dbReference>
<dbReference type="SMR" id="C1CC24"/>
<dbReference type="GeneID" id="93738975"/>
<dbReference type="KEGG" id="sjj:SPJ_0237"/>
<dbReference type="HOGENOM" id="CLU_131047_2_1_9"/>
<dbReference type="Proteomes" id="UP000002206">
    <property type="component" value="Chromosome"/>
</dbReference>
<dbReference type="GO" id="GO:0022625">
    <property type="term" value="C:cytosolic large ribosomal subunit"/>
    <property type="evidence" value="ECO:0007669"/>
    <property type="project" value="TreeGrafter"/>
</dbReference>
<dbReference type="GO" id="GO:0003735">
    <property type="term" value="F:structural constituent of ribosome"/>
    <property type="evidence" value="ECO:0007669"/>
    <property type="project" value="InterPro"/>
</dbReference>
<dbReference type="GO" id="GO:0006412">
    <property type="term" value="P:translation"/>
    <property type="evidence" value="ECO:0007669"/>
    <property type="project" value="UniProtKB-UniRule"/>
</dbReference>
<dbReference type="CDD" id="cd01658">
    <property type="entry name" value="Ribosomal_L30"/>
    <property type="match status" value="1"/>
</dbReference>
<dbReference type="FunFam" id="3.30.1390.20:FF:000001">
    <property type="entry name" value="50S ribosomal protein L30"/>
    <property type="match status" value="1"/>
</dbReference>
<dbReference type="Gene3D" id="3.30.1390.20">
    <property type="entry name" value="Ribosomal protein L30, ferredoxin-like fold domain"/>
    <property type="match status" value="1"/>
</dbReference>
<dbReference type="HAMAP" id="MF_01371_B">
    <property type="entry name" value="Ribosomal_uL30_B"/>
    <property type="match status" value="1"/>
</dbReference>
<dbReference type="InterPro" id="IPR036919">
    <property type="entry name" value="Ribo_uL30_ferredoxin-like_sf"/>
</dbReference>
<dbReference type="InterPro" id="IPR005996">
    <property type="entry name" value="Ribosomal_uL30_bac-type"/>
</dbReference>
<dbReference type="InterPro" id="IPR018038">
    <property type="entry name" value="Ribosomal_uL30_CS"/>
</dbReference>
<dbReference type="InterPro" id="IPR016082">
    <property type="entry name" value="Ribosomal_uL30_ferredoxin-like"/>
</dbReference>
<dbReference type="NCBIfam" id="TIGR01308">
    <property type="entry name" value="rpmD_bact"/>
    <property type="match status" value="1"/>
</dbReference>
<dbReference type="PANTHER" id="PTHR15892:SF2">
    <property type="entry name" value="LARGE RIBOSOMAL SUBUNIT PROTEIN UL30M"/>
    <property type="match status" value="1"/>
</dbReference>
<dbReference type="PANTHER" id="PTHR15892">
    <property type="entry name" value="MITOCHONDRIAL RIBOSOMAL PROTEIN L30"/>
    <property type="match status" value="1"/>
</dbReference>
<dbReference type="Pfam" id="PF00327">
    <property type="entry name" value="Ribosomal_L30"/>
    <property type="match status" value="1"/>
</dbReference>
<dbReference type="PIRSF" id="PIRSF002211">
    <property type="entry name" value="Ribosomal_L30_bac-type"/>
    <property type="match status" value="1"/>
</dbReference>
<dbReference type="SUPFAM" id="SSF55129">
    <property type="entry name" value="Ribosomal protein L30p/L7e"/>
    <property type="match status" value="1"/>
</dbReference>
<dbReference type="PROSITE" id="PS00634">
    <property type="entry name" value="RIBOSOMAL_L30"/>
    <property type="match status" value="1"/>
</dbReference>
<reference key="1">
    <citation type="journal article" date="2010" name="Genome Biol.">
        <title>Structure and dynamics of the pan-genome of Streptococcus pneumoniae and closely related species.</title>
        <authorList>
            <person name="Donati C."/>
            <person name="Hiller N.L."/>
            <person name="Tettelin H."/>
            <person name="Muzzi A."/>
            <person name="Croucher N.J."/>
            <person name="Angiuoli S.V."/>
            <person name="Oggioni M."/>
            <person name="Dunning Hotopp J.C."/>
            <person name="Hu F.Z."/>
            <person name="Riley D.R."/>
            <person name="Covacci A."/>
            <person name="Mitchell T.J."/>
            <person name="Bentley S.D."/>
            <person name="Kilian M."/>
            <person name="Ehrlich G.D."/>
            <person name="Rappuoli R."/>
            <person name="Moxon E.R."/>
            <person name="Masignani V."/>
        </authorList>
    </citation>
    <scope>NUCLEOTIDE SEQUENCE [LARGE SCALE GENOMIC DNA]</scope>
    <source>
        <strain>JJA</strain>
    </source>
</reference>
<organism>
    <name type="scientific">Streptococcus pneumoniae (strain JJA)</name>
    <dbReference type="NCBI Taxonomy" id="488222"/>
    <lineage>
        <taxon>Bacteria</taxon>
        <taxon>Bacillati</taxon>
        <taxon>Bacillota</taxon>
        <taxon>Bacilli</taxon>
        <taxon>Lactobacillales</taxon>
        <taxon>Streptococcaceae</taxon>
        <taxon>Streptococcus</taxon>
    </lineage>
</organism>
<gene>
    <name evidence="1" type="primary">rpmD</name>
    <name type="ordered locus">SPJ_0237</name>
</gene>
<accession>C1CC24</accession>
<proteinExistence type="inferred from homology"/>
<protein>
    <recommendedName>
        <fullName evidence="1">Large ribosomal subunit protein uL30</fullName>
    </recommendedName>
    <alternativeName>
        <fullName evidence="2">50S ribosomal protein L30</fullName>
    </alternativeName>
</protein>
<comment type="subunit">
    <text evidence="1">Part of the 50S ribosomal subunit.</text>
</comment>
<comment type="similarity">
    <text evidence="1">Belongs to the universal ribosomal protein uL30 family.</text>
</comment>
<name>RL30_STRZJ</name>
<evidence type="ECO:0000255" key="1">
    <source>
        <dbReference type="HAMAP-Rule" id="MF_01371"/>
    </source>
</evidence>
<evidence type="ECO:0000305" key="2"/>
<keyword id="KW-0687">Ribonucleoprotein</keyword>
<keyword id="KW-0689">Ribosomal protein</keyword>
<sequence>MAQIKITLTKSPIGRIPSQRKTVVALGLGKLNSSVIKEDNAAIRGMITAVSHLVTVEEVN</sequence>
<feature type="chain" id="PRO_1000184164" description="Large ribosomal subunit protein uL30">
    <location>
        <begin position="1"/>
        <end position="60"/>
    </location>
</feature>